<feature type="chain" id="PRO_0000220546" description="HTH-type transcriptional regulator rot">
    <location>
        <begin position="1"/>
        <end position="166"/>
    </location>
</feature>
<feature type="DNA-binding region" description="H-T-H motif" evidence="2">
    <location>
        <begin position="87"/>
        <end position="110"/>
    </location>
</feature>
<evidence type="ECO:0000250" key="1"/>
<evidence type="ECO:0000255" key="2"/>
<evidence type="ECO:0000305" key="3"/>
<comment type="function">
    <text evidence="1">Global regulator with both positive and negative effects that mediates modulation of several genes involved in virulence. Also, modulates the expression of genes not previously implicated in pathogenesis (By similarity).</text>
</comment>
<comment type="similarity">
    <text evidence="3">Belongs to the rot family.</text>
</comment>
<comment type="sequence caution" evidence="3">
    <conflict type="erroneous initiation">
        <sequence resource="EMBL-CDS" id="BAB42851"/>
    </conflict>
</comment>
<sequence>MHKLAHTSFGIVGMFVNTCMVAKYVIINWEMFSMKKVNNDTVFGILQLETLLGDINSIFSEIESEYKMSREEILILLTLWQKGSMTLKEMDRFVEVKPYKRTRTYNNLVELEWIYKERPVDDERTVIIHFNEKLQQEKVELLNFISDAIASRATAMQNSLNAIIAV</sequence>
<keyword id="KW-0010">Activator</keyword>
<keyword id="KW-0238">DNA-binding</keyword>
<keyword id="KW-0678">Repressor</keyword>
<keyword id="KW-0804">Transcription</keyword>
<keyword id="KW-0805">Transcription regulation</keyword>
<keyword id="KW-0843">Virulence</keyword>
<dbReference type="EMBL" id="BA000018">
    <property type="protein sequence ID" value="BAB42851.1"/>
    <property type="status" value="ALT_INIT"/>
    <property type="molecule type" value="Genomic_DNA"/>
</dbReference>
<dbReference type="PIR" id="F89961">
    <property type="entry name" value="F89961"/>
</dbReference>
<dbReference type="SMR" id="Q7A514"/>
<dbReference type="EnsemblBacteria" id="BAB42851">
    <property type="protein sequence ID" value="BAB42851"/>
    <property type="gene ID" value="BAB42851"/>
</dbReference>
<dbReference type="KEGG" id="sau:SA1583"/>
<dbReference type="HOGENOM" id="CLU_132118_0_0_9"/>
<dbReference type="GO" id="GO:0003677">
    <property type="term" value="F:DNA binding"/>
    <property type="evidence" value="ECO:0007669"/>
    <property type="project" value="UniProtKB-KW"/>
</dbReference>
<dbReference type="GO" id="GO:0003700">
    <property type="term" value="F:DNA-binding transcription factor activity"/>
    <property type="evidence" value="ECO:0007669"/>
    <property type="project" value="InterPro"/>
</dbReference>
<dbReference type="GO" id="GO:0006950">
    <property type="term" value="P:response to stress"/>
    <property type="evidence" value="ECO:0007669"/>
    <property type="project" value="TreeGrafter"/>
</dbReference>
<dbReference type="FunFam" id="1.10.10.10:FF:000715">
    <property type="entry name" value="HTH-type transcriptional regulator rot"/>
    <property type="match status" value="1"/>
</dbReference>
<dbReference type="Gene3D" id="1.10.10.10">
    <property type="entry name" value="Winged helix-like DNA-binding domain superfamily/Winged helix DNA-binding domain"/>
    <property type="match status" value="1"/>
</dbReference>
<dbReference type="InterPro" id="IPR000835">
    <property type="entry name" value="HTH_MarR-typ"/>
</dbReference>
<dbReference type="InterPro" id="IPR039422">
    <property type="entry name" value="MarR/SlyA-like"/>
</dbReference>
<dbReference type="InterPro" id="IPR016998">
    <property type="entry name" value="Rot"/>
</dbReference>
<dbReference type="InterPro" id="IPR010166">
    <property type="entry name" value="SarA/Rot_dom"/>
</dbReference>
<dbReference type="InterPro" id="IPR055166">
    <property type="entry name" value="Transc_reg_Sar_Rot_HTH"/>
</dbReference>
<dbReference type="InterPro" id="IPR036388">
    <property type="entry name" value="WH-like_DNA-bd_sf"/>
</dbReference>
<dbReference type="InterPro" id="IPR036390">
    <property type="entry name" value="WH_DNA-bd_sf"/>
</dbReference>
<dbReference type="NCBIfam" id="TIGR01889">
    <property type="entry name" value="Staph_reg_Sar"/>
    <property type="match status" value="1"/>
</dbReference>
<dbReference type="PANTHER" id="PTHR33164:SF56">
    <property type="entry name" value="HTH-TYPE TRANSCRIPTIONAL REGULATOR MHQR"/>
    <property type="match status" value="1"/>
</dbReference>
<dbReference type="PANTHER" id="PTHR33164">
    <property type="entry name" value="TRANSCRIPTIONAL REGULATOR, MARR FAMILY"/>
    <property type="match status" value="1"/>
</dbReference>
<dbReference type="Pfam" id="PF22381">
    <property type="entry name" value="Staph_reg_Sar_Rot"/>
    <property type="match status" value="1"/>
</dbReference>
<dbReference type="PIRSF" id="PIRSF032474">
    <property type="entry name" value="TF_HTH_Rot"/>
    <property type="match status" value="1"/>
</dbReference>
<dbReference type="SMART" id="SM00347">
    <property type="entry name" value="HTH_MARR"/>
    <property type="match status" value="1"/>
</dbReference>
<dbReference type="SUPFAM" id="SSF46785">
    <property type="entry name" value="Winged helix' DNA-binding domain"/>
    <property type="match status" value="1"/>
</dbReference>
<protein>
    <recommendedName>
        <fullName>HTH-type transcriptional regulator rot</fullName>
    </recommendedName>
    <alternativeName>
        <fullName>Repressor of toxins</fullName>
    </alternativeName>
</protein>
<reference key="1">
    <citation type="journal article" date="2001" name="Lancet">
        <title>Whole genome sequencing of meticillin-resistant Staphylococcus aureus.</title>
        <authorList>
            <person name="Kuroda M."/>
            <person name="Ohta T."/>
            <person name="Uchiyama I."/>
            <person name="Baba T."/>
            <person name="Yuzawa H."/>
            <person name="Kobayashi I."/>
            <person name="Cui L."/>
            <person name="Oguchi A."/>
            <person name="Aoki K."/>
            <person name="Nagai Y."/>
            <person name="Lian J.-Q."/>
            <person name="Ito T."/>
            <person name="Kanamori M."/>
            <person name="Matsumaru H."/>
            <person name="Maruyama A."/>
            <person name="Murakami H."/>
            <person name="Hosoyama A."/>
            <person name="Mizutani-Ui Y."/>
            <person name="Takahashi N.K."/>
            <person name="Sawano T."/>
            <person name="Inoue R."/>
            <person name="Kaito C."/>
            <person name="Sekimizu K."/>
            <person name="Hirakawa H."/>
            <person name="Kuhara S."/>
            <person name="Goto S."/>
            <person name="Yabuzaki J."/>
            <person name="Kanehisa M."/>
            <person name="Yamashita A."/>
            <person name="Oshima K."/>
            <person name="Furuya K."/>
            <person name="Yoshino C."/>
            <person name="Shiba T."/>
            <person name="Hattori M."/>
            <person name="Ogasawara N."/>
            <person name="Hayashi H."/>
            <person name="Hiramatsu K."/>
        </authorList>
    </citation>
    <scope>NUCLEOTIDE SEQUENCE [LARGE SCALE GENOMIC DNA]</scope>
    <source>
        <strain>N315</strain>
    </source>
</reference>
<reference key="2">
    <citation type="submission" date="2007-10" db="UniProtKB">
        <title>Shotgun proteomic analysis of total and membrane protein extracts of S. aureus strain N315.</title>
        <authorList>
            <person name="Vaezzadeh A.R."/>
            <person name="Deshusses J."/>
            <person name="Lescuyer P."/>
            <person name="Hochstrasser D.F."/>
        </authorList>
    </citation>
    <scope>IDENTIFICATION BY MASS SPECTROMETRY [LARGE SCALE ANALYSIS]</scope>
    <source>
        <strain>N315</strain>
    </source>
</reference>
<name>ROT_STAAN</name>
<accession>Q7A514</accession>
<proteinExistence type="evidence at protein level"/>
<organism>
    <name type="scientific">Staphylococcus aureus (strain N315)</name>
    <dbReference type="NCBI Taxonomy" id="158879"/>
    <lineage>
        <taxon>Bacteria</taxon>
        <taxon>Bacillati</taxon>
        <taxon>Bacillota</taxon>
        <taxon>Bacilli</taxon>
        <taxon>Bacillales</taxon>
        <taxon>Staphylococcaceae</taxon>
        <taxon>Staphylococcus</taxon>
    </lineage>
</organism>
<gene>
    <name type="primary">rot</name>
    <name type="ordered locus">SA1583</name>
</gene>